<gene>
    <name evidence="10" type="primary">Slc5a4b</name>
</gene>
<feature type="chain" id="PRO_0000458212" description="Solute carrier family 5 member 4B">
    <location>
        <begin position="1"/>
        <end position="660"/>
    </location>
</feature>
<feature type="topological domain" description="Cytoplasmic" evidence="8">
    <location>
        <begin position="1"/>
        <end position="27"/>
    </location>
</feature>
<feature type="transmembrane region" description="Helical" evidence="2">
    <location>
        <begin position="28"/>
        <end position="48"/>
    </location>
</feature>
<feature type="topological domain" description="Extracellular" evidence="8">
    <location>
        <begin position="49"/>
        <end position="54"/>
    </location>
</feature>
<feature type="transmembrane region" description="Helical" evidence="2">
    <location>
        <begin position="55"/>
        <end position="75"/>
    </location>
</feature>
<feature type="topological domain" description="Cytoplasmic" evidence="8">
    <location>
        <begin position="76"/>
        <end position="82"/>
    </location>
</feature>
<feature type="transmembrane region" description="Helical" evidence="2">
    <location>
        <begin position="83"/>
        <end position="103"/>
    </location>
</feature>
<feature type="topological domain" description="Extracellular" evidence="8">
    <location>
        <begin position="104"/>
        <end position="105"/>
    </location>
</feature>
<feature type="transmembrane region" description="Helical" evidence="2">
    <location>
        <begin position="106"/>
        <end position="126"/>
    </location>
</feature>
<feature type="topological domain" description="Cytoplasmic" evidence="8">
    <location>
        <begin position="127"/>
        <end position="142"/>
    </location>
</feature>
<feature type="transmembrane region" description="Helical" evidence="2">
    <location>
        <begin position="143"/>
        <end position="163"/>
    </location>
</feature>
<feature type="topological domain" description="Extracellular" evidence="8">
    <location>
        <begin position="164"/>
        <end position="166"/>
    </location>
</feature>
<feature type="transmembrane region" description="Helical" evidence="2">
    <location>
        <begin position="167"/>
        <end position="187"/>
    </location>
</feature>
<feature type="topological domain" description="Cytoplasmic" evidence="8">
    <location>
        <begin position="188"/>
        <end position="208"/>
    </location>
</feature>
<feature type="transmembrane region" description="Helical" evidence="2">
    <location>
        <begin position="209"/>
        <end position="229"/>
    </location>
</feature>
<feature type="topological domain" description="Extracellular" evidence="8">
    <location>
        <begin position="230"/>
        <end position="277"/>
    </location>
</feature>
<feature type="transmembrane region" description="Helical" evidence="2">
    <location>
        <begin position="278"/>
        <end position="298"/>
    </location>
</feature>
<feature type="topological domain" description="Cytoplasmic" evidence="8">
    <location>
        <begin position="299"/>
        <end position="313"/>
    </location>
</feature>
<feature type="transmembrane region" description="Helical" evidence="2">
    <location>
        <begin position="314"/>
        <end position="334"/>
    </location>
</feature>
<feature type="topological domain" description="Extracellular" evidence="8">
    <location>
        <begin position="335"/>
        <end position="380"/>
    </location>
</feature>
<feature type="transmembrane region" description="Helical" evidence="2">
    <location>
        <begin position="381"/>
        <end position="401"/>
    </location>
</feature>
<feature type="topological domain" description="Cytoplasmic" evidence="8">
    <location>
        <begin position="402"/>
        <end position="423"/>
    </location>
</feature>
<feature type="transmembrane region" description="Helical" evidence="2">
    <location>
        <begin position="424"/>
        <end position="444"/>
    </location>
</feature>
<feature type="topological domain" description="Extracellular" evidence="8">
    <location>
        <begin position="445"/>
        <end position="455"/>
    </location>
</feature>
<feature type="transmembrane region" description="Helical" evidence="2">
    <location>
        <begin position="456"/>
        <end position="476"/>
    </location>
</feature>
<feature type="topological domain" description="Cytoplasmic" evidence="8">
    <location>
        <begin position="477"/>
        <end position="484"/>
    </location>
</feature>
<feature type="transmembrane region" description="Helical" evidence="2">
    <location>
        <begin position="485"/>
        <end position="505"/>
    </location>
</feature>
<feature type="topological domain" description="Extracellular" evidence="8">
    <location>
        <begin position="506"/>
        <end position="526"/>
    </location>
</feature>
<feature type="transmembrane region" description="Helical" evidence="2">
    <location>
        <begin position="527"/>
        <end position="547"/>
    </location>
</feature>
<feature type="topological domain" description="Cytoplasmic" evidence="8">
    <location>
        <begin position="548"/>
        <end position="639"/>
    </location>
</feature>
<feature type="transmembrane region" description="Helical" evidence="2">
    <location>
        <begin position="640"/>
        <end position="660"/>
    </location>
</feature>
<feature type="sequence conflict" description="In Ref. 1; AAG01742." evidence="8" ref="1">
    <original>S</original>
    <variation>A</variation>
    <location>
        <position position="46"/>
    </location>
</feature>
<feature type="sequence conflict" description="In Ref. 1; AAG01742." evidence="8" ref="1">
    <original>L</original>
    <variation>M</variation>
    <location>
        <position position="126"/>
    </location>
</feature>
<feature type="sequence conflict" description="In Ref. 1; AAG01742." evidence="8" ref="1">
    <original>S</original>
    <variation>A</variation>
    <location>
        <position position="160"/>
    </location>
</feature>
<feature type="sequence conflict" description="In Ref. 1; AAG01742." evidence="8" ref="1">
    <original>VA</original>
    <variation>AT</variation>
    <location>
        <begin position="193"/>
        <end position="194"/>
    </location>
</feature>
<feature type="sequence conflict" description="In Ref. 1; AAG01742." evidence="8" ref="1">
    <original>T</original>
    <variation>TA</variation>
    <location>
        <position position="340"/>
    </location>
</feature>
<feature type="sequence conflict" description="In Ref. 1; AAG01742." evidence="8" ref="1">
    <original>D</original>
    <variation>E</variation>
    <location>
        <position position="376"/>
    </location>
</feature>
<evidence type="ECO:0000250" key="1">
    <source>
        <dbReference type="UniProtKB" id="Q9ET37"/>
    </source>
</evidence>
<evidence type="ECO:0000255" key="2"/>
<evidence type="ECO:0000269" key="3">
    <source>
    </source>
</evidence>
<evidence type="ECO:0000269" key="4">
    <source>
    </source>
</evidence>
<evidence type="ECO:0000269" key="5">
    <source>
    </source>
</evidence>
<evidence type="ECO:0000269" key="6">
    <source>
    </source>
</evidence>
<evidence type="ECO:0000303" key="7">
    <source>
    </source>
</evidence>
<evidence type="ECO:0000305" key="8"/>
<evidence type="ECO:0000305" key="9">
    <source>
    </source>
</evidence>
<evidence type="ECO:0000312" key="10">
    <source>
        <dbReference type="MGI" id="MGI:1890478"/>
    </source>
</evidence>
<reference key="1">
    <citation type="journal article" date="2000" name="Genome Res.">
        <title>Chromosome evolution: the junction of mammalian chromosomes in the formation of mouse chromosome 10.</title>
        <authorList>
            <person name="Pletcher M.T."/>
            <person name="Roe B.A."/>
            <person name="Chen F."/>
            <person name="Do T."/>
            <person name="Do A."/>
            <person name="Malaj E."/>
            <person name="Reeves R.H."/>
        </authorList>
    </citation>
    <scope>NUCLEOTIDE SEQUENCE [MRNA]</scope>
    <source>
        <strain>129S6/SvEvTac</strain>
    </source>
</reference>
<reference key="2">
    <citation type="journal article" date="2001" name="Toxicol. Appl. Pharmacol.">
        <title>Differential regulation of mouse kidney sodium-dependent transporters mRNA by cadmium.</title>
        <authorList>
            <person name="Tabatabai N.M."/>
            <person name="Blumenthal S.S."/>
            <person name="Lewand D.L."/>
            <person name="Petering D.H."/>
        </authorList>
    </citation>
    <scope>NUCLEOTIDE SEQUENCE [MRNA]</scope>
    <scope>INDUCTION</scope>
    <source>
        <strain>C57BL/6J</strain>
        <tissue>Kidney</tissue>
    </source>
</reference>
<reference key="3">
    <citation type="journal article" date="2003" name="Kidney Int.">
        <title>Mouse kidney expresses mRNA of four highly related sodium-glucose cotransporters: regulation by cadmium.</title>
        <authorList>
            <person name="Tabatabai N.M."/>
            <person name="Blumenthal S.S."/>
            <person name="Lewand D.L."/>
            <person name="Petering D.H."/>
        </authorList>
    </citation>
    <scope>SEQUENCE REVISION TO 590</scope>
    <scope>TISSUE SPECIFICITY</scope>
    <source>
        <strain>C57BL/6J</strain>
        <tissue>Kidney</tissue>
    </source>
</reference>
<reference key="4">
    <citation type="journal article" date="2009" name="PLoS Biol.">
        <title>Lineage-specific biology revealed by a finished genome assembly of the mouse.</title>
        <authorList>
            <person name="Church D.M."/>
            <person name="Goodstadt L."/>
            <person name="Hillier L.W."/>
            <person name="Zody M.C."/>
            <person name="Goldstein S."/>
            <person name="She X."/>
            <person name="Bult C.J."/>
            <person name="Agarwala R."/>
            <person name="Cherry J.L."/>
            <person name="DiCuccio M."/>
            <person name="Hlavina W."/>
            <person name="Kapustin Y."/>
            <person name="Meric P."/>
            <person name="Maglott D."/>
            <person name="Birtle Z."/>
            <person name="Marques A.C."/>
            <person name="Graves T."/>
            <person name="Zhou S."/>
            <person name="Teague B."/>
            <person name="Potamousis K."/>
            <person name="Churas C."/>
            <person name="Place M."/>
            <person name="Herschleb J."/>
            <person name="Runnheim R."/>
            <person name="Forrest D."/>
            <person name="Amos-Landgraf J."/>
            <person name="Schwartz D.C."/>
            <person name="Cheng Z."/>
            <person name="Lindblad-Toh K."/>
            <person name="Eichler E.E."/>
            <person name="Ponting C.P."/>
        </authorList>
    </citation>
    <scope>NUCLEOTIDE SEQUENCE [LARGE SCALE GENOMIC DNA]</scope>
    <source>
        <strain>C57BL/6J</strain>
    </source>
</reference>
<reference key="5">
    <citation type="journal article" date="2010" name="Am. J. Physiol.">
        <title>Functional characterization of mouse sodium/glucose transporter type 3b.</title>
        <authorList>
            <person name="Aljure O."/>
            <person name="Diez-Sampedro A."/>
        </authorList>
    </citation>
    <scope>FUNCTION</scope>
    <scope>TRANSPORTER ACTIVITY</scope>
    <scope>ACTIVITY REGULATION</scope>
</reference>
<reference key="6">
    <citation type="journal article" date="2012" name="Am. J. Physiol.">
        <title>Mouse SGLT3a generates proton-activated currents but does not transport sugar.</title>
        <authorList>
            <person name="Barcelona S."/>
            <person name="Menegaz D."/>
            <person name="Diez-Sampedro A."/>
        </authorList>
    </citation>
    <scope>FUNCTION</scope>
    <scope>TRANSPORTER ACTIVITY</scope>
    <scope>TISSUE SPECIFICITY</scope>
</reference>
<sequence length="660" mass="72246">MASTLSPSITPQTEEPPVVPVRIQNAADISVIVIYFIVVLAVGLWSMVRSNRGTVGGFFLAGHDMAWWPMGASLFASNIGSNHFVGLAGTGAASGIAIAAVEWNALLMVLVLGWVFLPIYIKAGVLTMPEYLRKRFGGKRLQIYLSVLSLFIMVALQTSSIIFSGAIFIQLALGLNLYLAVFILLAITAFYTVAGGLASVIYTDSVQTFIMLLGSLILMGFAFAEVGGYESFTEKYMNAIPSVVEGDNLTISPKCYTPQPDSFHVFRDPVTGDIPWPGLIFGMTILAIWYWCADQVIVQRCLCGKNMSHVKAACILCGYLKLLPMFLMVMPGMISRILYTDKVACVVPSECEKQCGTAVGCTNYAYPTLVLELMPDGLRGLMLSVMLASLMSSLTSIFNSASTLFTIDLYTKIRKKASERELMIAGRIFGMVLIAVSILWVPLVQVSQNGQLFHYIGSVSSYLGPPLGAVFMLAIFFKRVNEQGAFWGLMVGLVVGLIRLIAEFVYGTGSCVAPSNCPKIICGVHYMYFAIILFFVSIIVILGVSFLTEPIPDVHLYRLCWSLWNNTEERIDLDAEELETQEEAGGALEEDSEQSRGCLKRACCLLCGLQNTGPKLTKEEEAALRQKFSDTSEKPLWRTVMNINAVLLLGVAVFVHAYFA</sequence>
<proteinExistence type="evidence at transcript level"/>
<accession>Q91ZP4</accession>
<accession>Q9ET36</accession>
<comment type="function">
    <text evidence="6 9">Low-affinity sodium/D-glucose symporter (Probable) (PubMed:22301059). Generates D-glucose-induced depolarization in a pH-independent manner (PubMed:22301059).</text>
</comment>
<comment type="catalytic activity">
    <reaction evidence="6 9">
        <text>D-glucose(out) + 2 Na(+)(out) = D-glucose(in) + 2 Na(+)(in)</text>
        <dbReference type="Rhea" id="RHEA:70495"/>
        <dbReference type="ChEBI" id="CHEBI:4167"/>
        <dbReference type="ChEBI" id="CHEBI:29101"/>
    </reaction>
</comment>
<comment type="activity regulation">
    <text evidence="5">Inhibited by phlorizin.</text>
</comment>
<comment type="subcellular location">
    <subcellularLocation>
        <location evidence="1">Cell membrane</location>
        <topology evidence="2">Multi-pass membrane protein</topology>
    </subcellularLocation>
</comment>
<comment type="tissue specificity">
    <text evidence="4 6">Expressed in small intestine (PubMed:22301059). Expressed in kidney (PubMed:12969150).</text>
</comment>
<comment type="induction">
    <text evidence="3">Significantly increased by cadnium.</text>
</comment>
<comment type="similarity">
    <text evidence="8">Belongs to the sodium:solute symporter (SSF) (TC 2.A.21) family.</text>
</comment>
<comment type="sequence caution" evidence="8">
    <conflict type="frameshift">
        <sequence resource="EMBL-CDS" id="AAG01742"/>
    </conflict>
</comment>
<dbReference type="EMBL" id="AF251268">
    <property type="protein sequence ID" value="AAG01742.1"/>
    <property type="status" value="ALT_FRAME"/>
    <property type="molecule type" value="mRNA"/>
</dbReference>
<dbReference type="EMBL" id="AF411960">
    <property type="protein sequence ID" value="AAL06342.2"/>
    <property type="molecule type" value="mRNA"/>
</dbReference>
<dbReference type="EMBL" id="AC134382">
    <property type="status" value="NOT_ANNOTATED_CDS"/>
    <property type="molecule type" value="Genomic_DNA"/>
</dbReference>
<dbReference type="EMBL" id="AC140851">
    <property type="status" value="NOT_ANNOTATED_CDS"/>
    <property type="molecule type" value="Genomic_DNA"/>
</dbReference>
<dbReference type="CCDS" id="CCDS48603.1"/>
<dbReference type="RefSeq" id="NP_075708.2">
    <property type="nucleotide sequence ID" value="NM_023219.2"/>
</dbReference>
<dbReference type="SMR" id="Q91ZP4"/>
<dbReference type="FunCoup" id="Q91ZP4">
    <property type="interactions" value="93"/>
</dbReference>
<dbReference type="STRING" id="10090.ENSMUSP00000113582"/>
<dbReference type="BindingDB" id="Q91ZP4"/>
<dbReference type="ChEMBL" id="CHEMBL3309104"/>
<dbReference type="PhosphoSitePlus" id="Q91ZP4"/>
<dbReference type="jPOST" id="Q91ZP4"/>
<dbReference type="PaxDb" id="10090-ENSMUSP00000113582"/>
<dbReference type="ProteomicsDB" id="344702"/>
<dbReference type="DNASU" id="64454"/>
<dbReference type="Ensembl" id="ENSMUST00000120757.2">
    <property type="protein sequence ID" value="ENSMUSP00000113582.2"/>
    <property type="gene ID" value="ENSMUSG00000020226.10"/>
</dbReference>
<dbReference type="GeneID" id="64454"/>
<dbReference type="KEGG" id="mmu:64454"/>
<dbReference type="UCSC" id="uc007ftx.1">
    <property type="organism name" value="mouse"/>
</dbReference>
<dbReference type="AGR" id="MGI:1890478"/>
<dbReference type="CTD" id="64454"/>
<dbReference type="MGI" id="MGI:1890478">
    <property type="gene designation" value="Slc5a4b"/>
</dbReference>
<dbReference type="VEuPathDB" id="HostDB:ENSMUSG00000020226"/>
<dbReference type="eggNOG" id="KOG2349">
    <property type="taxonomic scope" value="Eukaryota"/>
</dbReference>
<dbReference type="GeneTree" id="ENSGT00940000160846"/>
<dbReference type="HOGENOM" id="CLU_018808_9_2_1"/>
<dbReference type="InParanoid" id="Q91ZP4"/>
<dbReference type="OMA" id="IAAVEWN"/>
<dbReference type="OrthoDB" id="6132759at2759"/>
<dbReference type="TreeFam" id="TF352855"/>
<dbReference type="BioGRID-ORCS" id="64454">
    <property type="hits" value="1 hit in 76 CRISPR screens"/>
</dbReference>
<dbReference type="ChiTaRS" id="Slc5a4b">
    <property type="organism name" value="mouse"/>
</dbReference>
<dbReference type="PRO" id="PR:Q91ZP4"/>
<dbReference type="Proteomes" id="UP000000589">
    <property type="component" value="Chromosome 10"/>
</dbReference>
<dbReference type="RNAct" id="Q91ZP4">
    <property type="molecule type" value="protein"/>
</dbReference>
<dbReference type="Bgee" id="ENSMUSG00000020226">
    <property type="expression patterns" value="Expressed in small intestine Peyer's patch and 15 other cell types or tissues"/>
</dbReference>
<dbReference type="GO" id="GO:0016020">
    <property type="term" value="C:membrane"/>
    <property type="evidence" value="ECO:0000305"/>
    <property type="project" value="MGI"/>
</dbReference>
<dbReference type="GO" id="GO:0005886">
    <property type="term" value="C:plasma membrane"/>
    <property type="evidence" value="ECO:0007669"/>
    <property type="project" value="UniProtKB-SubCell"/>
</dbReference>
<dbReference type="GO" id="GO:0005402">
    <property type="term" value="F:carbohydrate:monoatomic cation symporter activity"/>
    <property type="evidence" value="ECO:0000314"/>
    <property type="project" value="MGI"/>
</dbReference>
<dbReference type="GO" id="GO:0005362">
    <property type="term" value="F:low-affinity D-glucose:sodium symporter activity"/>
    <property type="evidence" value="ECO:0000314"/>
    <property type="project" value="UniProtKB"/>
</dbReference>
<dbReference type="GO" id="GO:0008643">
    <property type="term" value="P:carbohydrate transport"/>
    <property type="evidence" value="ECO:0000314"/>
    <property type="project" value="MGI"/>
</dbReference>
<dbReference type="GO" id="GO:1904659">
    <property type="term" value="P:D-glucose transmembrane transport"/>
    <property type="evidence" value="ECO:0000314"/>
    <property type="project" value="MGI"/>
</dbReference>
<dbReference type="GO" id="GO:0006814">
    <property type="term" value="P:sodium ion transport"/>
    <property type="evidence" value="ECO:0000314"/>
    <property type="project" value="MGI"/>
</dbReference>
<dbReference type="FunFam" id="1.20.1730.10:FF:000005">
    <property type="entry name" value="sodium/glucose cotransporter 1 isoform X1"/>
    <property type="match status" value="1"/>
</dbReference>
<dbReference type="Gene3D" id="1.20.1730.10">
    <property type="entry name" value="Sodium/glucose cotransporter"/>
    <property type="match status" value="1"/>
</dbReference>
<dbReference type="InterPro" id="IPR038377">
    <property type="entry name" value="Na/Glc_symporter_sf"/>
</dbReference>
<dbReference type="InterPro" id="IPR001734">
    <property type="entry name" value="Na/solute_symporter"/>
</dbReference>
<dbReference type="InterPro" id="IPR018212">
    <property type="entry name" value="Na/solute_symporter_CS"/>
</dbReference>
<dbReference type="NCBIfam" id="TIGR00813">
    <property type="entry name" value="sss"/>
    <property type="match status" value="1"/>
</dbReference>
<dbReference type="PANTHER" id="PTHR11819">
    <property type="entry name" value="SOLUTE CARRIER FAMILY 5"/>
    <property type="match status" value="1"/>
</dbReference>
<dbReference type="PANTHER" id="PTHR11819:SF130">
    <property type="entry name" value="SOLUTE CARRIER FAMILY 5 MEMBER 4B"/>
    <property type="match status" value="1"/>
</dbReference>
<dbReference type="Pfam" id="PF00474">
    <property type="entry name" value="SSF"/>
    <property type="match status" value="1"/>
</dbReference>
<dbReference type="PROSITE" id="PS00456">
    <property type="entry name" value="NA_SOLUT_SYMP_1"/>
    <property type="match status" value="1"/>
</dbReference>
<dbReference type="PROSITE" id="PS00457">
    <property type="entry name" value="NA_SOLUT_SYMP_2"/>
    <property type="match status" value="1"/>
</dbReference>
<dbReference type="PROSITE" id="PS50283">
    <property type="entry name" value="NA_SOLUT_SYMP_3"/>
    <property type="match status" value="1"/>
</dbReference>
<protein>
    <recommendedName>
        <fullName>Solute carrier family 5 member 4B</fullName>
    </recommendedName>
    <alternativeName>
        <fullName evidence="9">Low affinity sodium-glucose cotransporter</fullName>
    </alternativeName>
    <alternativeName>
        <fullName evidence="7">SGLT3-b</fullName>
    </alternativeName>
</protein>
<keyword id="KW-1003">Cell membrane</keyword>
<keyword id="KW-0472">Membrane</keyword>
<keyword id="KW-1185">Reference proteome</keyword>
<keyword id="KW-0812">Transmembrane</keyword>
<keyword id="KW-1133">Transmembrane helix</keyword>
<name>S5A4B_MOUSE</name>
<organism>
    <name type="scientific">Mus musculus</name>
    <name type="common">Mouse</name>
    <dbReference type="NCBI Taxonomy" id="10090"/>
    <lineage>
        <taxon>Eukaryota</taxon>
        <taxon>Metazoa</taxon>
        <taxon>Chordata</taxon>
        <taxon>Craniata</taxon>
        <taxon>Vertebrata</taxon>
        <taxon>Euteleostomi</taxon>
        <taxon>Mammalia</taxon>
        <taxon>Eutheria</taxon>
        <taxon>Euarchontoglires</taxon>
        <taxon>Glires</taxon>
        <taxon>Rodentia</taxon>
        <taxon>Myomorpha</taxon>
        <taxon>Muroidea</taxon>
        <taxon>Muridae</taxon>
        <taxon>Murinae</taxon>
        <taxon>Mus</taxon>
        <taxon>Mus</taxon>
    </lineage>
</organism>